<reference key="1">
    <citation type="journal article" date="1999" name="Cancer Res.">
        <title>Bdp, a new member of a family of DNA-binding proteins, associates with the retinoblastoma gene product.</title>
        <authorList>
            <person name="Numata S."/>
            <person name="Claudio P.P."/>
            <person name="Dean C."/>
            <person name="Giordano A."/>
            <person name="Croce C.M."/>
        </authorList>
    </citation>
    <scope>NUCLEOTIDE SEQUENCE [MRNA] (ISOFORM 1)</scope>
</reference>
<reference key="2">
    <citation type="journal article" date="2005" name="Science">
        <title>The transcriptional landscape of the mammalian genome.</title>
        <authorList>
            <person name="Carninci P."/>
            <person name="Kasukawa T."/>
            <person name="Katayama S."/>
            <person name="Gough J."/>
            <person name="Frith M.C."/>
            <person name="Maeda N."/>
            <person name="Oyama R."/>
            <person name="Ravasi T."/>
            <person name="Lenhard B."/>
            <person name="Wells C."/>
            <person name="Kodzius R."/>
            <person name="Shimokawa K."/>
            <person name="Bajic V.B."/>
            <person name="Brenner S.E."/>
            <person name="Batalov S."/>
            <person name="Forrest A.R."/>
            <person name="Zavolan M."/>
            <person name="Davis M.J."/>
            <person name="Wilming L.G."/>
            <person name="Aidinis V."/>
            <person name="Allen J.E."/>
            <person name="Ambesi-Impiombato A."/>
            <person name="Apweiler R."/>
            <person name="Aturaliya R.N."/>
            <person name="Bailey T.L."/>
            <person name="Bansal M."/>
            <person name="Baxter L."/>
            <person name="Beisel K.W."/>
            <person name="Bersano T."/>
            <person name="Bono H."/>
            <person name="Chalk A.M."/>
            <person name="Chiu K.P."/>
            <person name="Choudhary V."/>
            <person name="Christoffels A."/>
            <person name="Clutterbuck D.R."/>
            <person name="Crowe M.L."/>
            <person name="Dalla E."/>
            <person name="Dalrymple B.P."/>
            <person name="de Bono B."/>
            <person name="Della Gatta G."/>
            <person name="di Bernardo D."/>
            <person name="Down T."/>
            <person name="Engstrom P."/>
            <person name="Fagiolini M."/>
            <person name="Faulkner G."/>
            <person name="Fletcher C.F."/>
            <person name="Fukushima T."/>
            <person name="Furuno M."/>
            <person name="Futaki S."/>
            <person name="Gariboldi M."/>
            <person name="Georgii-Hemming P."/>
            <person name="Gingeras T.R."/>
            <person name="Gojobori T."/>
            <person name="Green R.E."/>
            <person name="Gustincich S."/>
            <person name="Harbers M."/>
            <person name="Hayashi Y."/>
            <person name="Hensch T.K."/>
            <person name="Hirokawa N."/>
            <person name="Hill D."/>
            <person name="Huminiecki L."/>
            <person name="Iacono M."/>
            <person name="Ikeo K."/>
            <person name="Iwama A."/>
            <person name="Ishikawa T."/>
            <person name="Jakt M."/>
            <person name="Kanapin A."/>
            <person name="Katoh M."/>
            <person name="Kawasawa Y."/>
            <person name="Kelso J."/>
            <person name="Kitamura H."/>
            <person name="Kitano H."/>
            <person name="Kollias G."/>
            <person name="Krishnan S.P."/>
            <person name="Kruger A."/>
            <person name="Kummerfeld S.K."/>
            <person name="Kurochkin I.V."/>
            <person name="Lareau L.F."/>
            <person name="Lazarevic D."/>
            <person name="Lipovich L."/>
            <person name="Liu J."/>
            <person name="Liuni S."/>
            <person name="McWilliam S."/>
            <person name="Madan Babu M."/>
            <person name="Madera M."/>
            <person name="Marchionni L."/>
            <person name="Matsuda H."/>
            <person name="Matsuzawa S."/>
            <person name="Miki H."/>
            <person name="Mignone F."/>
            <person name="Miyake S."/>
            <person name="Morris K."/>
            <person name="Mottagui-Tabar S."/>
            <person name="Mulder N."/>
            <person name="Nakano N."/>
            <person name="Nakauchi H."/>
            <person name="Ng P."/>
            <person name="Nilsson R."/>
            <person name="Nishiguchi S."/>
            <person name="Nishikawa S."/>
            <person name="Nori F."/>
            <person name="Ohara O."/>
            <person name="Okazaki Y."/>
            <person name="Orlando V."/>
            <person name="Pang K.C."/>
            <person name="Pavan W.J."/>
            <person name="Pavesi G."/>
            <person name="Pesole G."/>
            <person name="Petrovsky N."/>
            <person name="Piazza S."/>
            <person name="Reed J."/>
            <person name="Reid J.F."/>
            <person name="Ring B.Z."/>
            <person name="Ringwald M."/>
            <person name="Rost B."/>
            <person name="Ruan Y."/>
            <person name="Salzberg S.L."/>
            <person name="Sandelin A."/>
            <person name="Schneider C."/>
            <person name="Schoenbach C."/>
            <person name="Sekiguchi K."/>
            <person name="Semple C.A."/>
            <person name="Seno S."/>
            <person name="Sessa L."/>
            <person name="Sheng Y."/>
            <person name="Shibata Y."/>
            <person name="Shimada H."/>
            <person name="Shimada K."/>
            <person name="Silva D."/>
            <person name="Sinclair B."/>
            <person name="Sperling S."/>
            <person name="Stupka E."/>
            <person name="Sugiura K."/>
            <person name="Sultana R."/>
            <person name="Takenaka Y."/>
            <person name="Taki K."/>
            <person name="Tammoja K."/>
            <person name="Tan S.L."/>
            <person name="Tang S."/>
            <person name="Taylor M.S."/>
            <person name="Tegner J."/>
            <person name="Teichmann S.A."/>
            <person name="Ueda H.R."/>
            <person name="van Nimwegen E."/>
            <person name="Verardo R."/>
            <person name="Wei C.L."/>
            <person name="Yagi K."/>
            <person name="Yamanishi H."/>
            <person name="Zabarovsky E."/>
            <person name="Zhu S."/>
            <person name="Zimmer A."/>
            <person name="Hide W."/>
            <person name="Bult C."/>
            <person name="Grimmond S.M."/>
            <person name="Teasdale R.D."/>
            <person name="Liu E.T."/>
            <person name="Brusic V."/>
            <person name="Quackenbush J."/>
            <person name="Wahlestedt C."/>
            <person name="Mattick J.S."/>
            <person name="Hume D.A."/>
            <person name="Kai C."/>
            <person name="Sasaki D."/>
            <person name="Tomaru Y."/>
            <person name="Fukuda S."/>
            <person name="Kanamori-Katayama M."/>
            <person name="Suzuki M."/>
            <person name="Aoki J."/>
            <person name="Arakawa T."/>
            <person name="Iida J."/>
            <person name="Imamura K."/>
            <person name="Itoh M."/>
            <person name="Kato T."/>
            <person name="Kawaji H."/>
            <person name="Kawagashira N."/>
            <person name="Kawashima T."/>
            <person name="Kojima M."/>
            <person name="Kondo S."/>
            <person name="Konno H."/>
            <person name="Nakano K."/>
            <person name="Ninomiya N."/>
            <person name="Nishio T."/>
            <person name="Okada M."/>
            <person name="Plessy C."/>
            <person name="Shibata K."/>
            <person name="Shiraki T."/>
            <person name="Suzuki S."/>
            <person name="Tagami M."/>
            <person name="Waki K."/>
            <person name="Watahiki A."/>
            <person name="Okamura-Oho Y."/>
            <person name="Suzuki H."/>
            <person name="Kawai J."/>
            <person name="Hayashizaki Y."/>
        </authorList>
    </citation>
    <scope>NUCLEOTIDE SEQUENCE [LARGE SCALE MRNA] (ISOFORM 3)</scope>
    <source>
        <strain>C57BL/6J</strain>
        <tissue>Brain cortex</tissue>
    </source>
</reference>
<reference key="3">
    <citation type="journal article" date="2004" name="Genome Res.">
        <title>The status, quality, and expansion of the NIH full-length cDNA project: the Mammalian Gene Collection (MGC).</title>
        <authorList>
            <consortium name="The MGC Project Team"/>
        </authorList>
    </citation>
    <scope>NUCLEOTIDE SEQUENCE [LARGE SCALE MRNA] (ISOFORM 2)</scope>
    <source>
        <tissue>Embryo</tissue>
    </source>
</reference>
<reference key="4">
    <citation type="journal article" date="2006" name="Dev. Biol.">
        <title>Microarray analysis of PDGFR alpha+ populations in ES cell differentiation culture identifies genes involved in differentiation of mesoderm and mesenchyme including ARID3b that is essential for development of embryonic mesenchymal cells.</title>
        <authorList>
            <person name="Takebe A."/>
            <person name="Era T."/>
            <person name="Okada M."/>
            <person name="Martin Jakt L."/>
            <person name="Kuroda Y."/>
            <person name="Nishikawa S."/>
        </authorList>
    </citation>
    <scope>DISRUPTION PHENOTYPE</scope>
    <scope>DEVELOPMENTAL STAGE</scope>
    <scope>TISSUE SPECIFICITY</scope>
    <scope>FUNCTION</scope>
</reference>
<reference key="5">
    <citation type="journal article" date="2014" name="Mol. Cell. Proteomics">
        <title>Immunoaffinity enrichment and mass spectrometry analysis of protein methylation.</title>
        <authorList>
            <person name="Guo A."/>
            <person name="Gu H."/>
            <person name="Zhou J."/>
            <person name="Mulhern D."/>
            <person name="Wang Y."/>
            <person name="Lee K.A."/>
            <person name="Yang V."/>
            <person name="Aguiar M."/>
            <person name="Kornhauser J."/>
            <person name="Jia X."/>
            <person name="Ren J."/>
            <person name="Beausoleil S.A."/>
            <person name="Silva J.C."/>
            <person name="Vemulapalli V."/>
            <person name="Bedford M.T."/>
            <person name="Comb M.J."/>
        </authorList>
    </citation>
    <scope>METHYLATION [LARGE SCALE ANALYSIS] AT ARG-370</scope>
    <scope>IDENTIFICATION BY MASS SPECTROMETRY [LARGE SCALE ANALYSIS]</scope>
    <source>
        <tissue>Embryo</tissue>
    </source>
</reference>
<keyword id="KW-0007">Acetylation</keyword>
<keyword id="KW-0025">Alternative splicing</keyword>
<keyword id="KW-0217">Developmental protein</keyword>
<keyword id="KW-0238">DNA-binding</keyword>
<keyword id="KW-0488">Methylation</keyword>
<keyword id="KW-0539">Nucleus</keyword>
<keyword id="KW-0597">Phosphoprotein</keyword>
<keyword id="KW-1185">Reference proteome</keyword>
<keyword id="KW-0804">Transcription</keyword>
<keyword id="KW-0805">Transcription regulation</keyword>
<name>ARI3B_MOUSE</name>
<sequence length="568" mass="61015">MEPLQQQQQQQQQKQPQQPLLQMDAREKQGPQTRESQFLYASKLGTQPALLSITPGRPSGSSVLGPLARVPPATPVARMSEQSNVNSEPEEEEGGLEDEDGDDDVAEVAEKEAQAASKYFHMQKVTRQEPRATPMSSLLPVPGLSPQGQQTKEDHTKDASKAPPSVPTAGQPSWSLDEQLKQNGALAWSDDADGGRGREISRDFAKLYELDGDPERKEFLDDLFIFMQKRGTPINRIPIMAKQILDLYMLYKLVTEKGGLVEIINKKIWREITKGLNLPTSITSAAFTLRTQYMKYLYAYECEKKALSSPAELQAAIDGNRREGRRPSYSSSLFGYSPAAAAAAAAAAAAAAASAASAGTPALLSSPKIRFSILGLGSSSGTSASSPRIPPASTLRKGDGVPVPVPNRLAVSGTLAGQQAGNRPGPLEHLRERLESGEPPEKKASRLSEEEQRLVQQAFQRNLFSMARQLPMKIRINGREDRAEPSAPALNLTTSNIGSINMSVDIDGTTYTGVLFAQKPVVHLIAGSTPQSIGSSASSSNSSSSHCSPSPTSSRGTPSAEPSTSWSL</sequence>
<evidence type="ECO:0000250" key="1"/>
<evidence type="ECO:0000250" key="2">
    <source>
        <dbReference type="UniProtKB" id="Q8IVW6"/>
    </source>
</evidence>
<evidence type="ECO:0000255" key="3">
    <source>
        <dbReference type="PROSITE-ProRule" id="PRU00355"/>
    </source>
</evidence>
<evidence type="ECO:0000255" key="4">
    <source>
        <dbReference type="PROSITE-ProRule" id="PRU00819"/>
    </source>
</evidence>
<evidence type="ECO:0000256" key="5">
    <source>
        <dbReference type="SAM" id="MobiDB-lite"/>
    </source>
</evidence>
<evidence type="ECO:0000269" key="6">
    <source>
    </source>
</evidence>
<evidence type="ECO:0000303" key="7">
    <source>
    </source>
</evidence>
<evidence type="ECO:0000303" key="8">
    <source>
    </source>
</evidence>
<evidence type="ECO:0000305" key="9"/>
<evidence type="ECO:0007744" key="10">
    <source>
    </source>
</evidence>
<feature type="chain" id="PRO_0000295163" description="AT-rich interactive domain-containing protein 3B">
    <location>
        <begin position="1"/>
        <end position="568"/>
    </location>
</feature>
<feature type="domain" description="ARID" evidence="3">
    <location>
        <begin position="213"/>
        <end position="305"/>
    </location>
</feature>
<feature type="domain" description="REKLES" evidence="4">
    <location>
        <begin position="425"/>
        <end position="522"/>
    </location>
</feature>
<feature type="region of interest" description="Disordered" evidence="5">
    <location>
        <begin position="1"/>
        <end position="174"/>
    </location>
</feature>
<feature type="region of interest" description="Interaction with RB1" evidence="1">
    <location>
        <begin position="201"/>
        <end position="374"/>
    </location>
</feature>
<feature type="region of interest" description="Disordered" evidence="5">
    <location>
        <begin position="378"/>
        <end position="403"/>
    </location>
</feature>
<feature type="region of interest" description="Interaction with ARID3A" evidence="1">
    <location>
        <begin position="495"/>
        <end position="518"/>
    </location>
</feature>
<feature type="region of interest" description="Disordered" evidence="5">
    <location>
        <begin position="529"/>
        <end position="568"/>
    </location>
</feature>
<feature type="compositionally biased region" description="Low complexity" evidence="5">
    <location>
        <begin position="1"/>
        <end position="22"/>
    </location>
</feature>
<feature type="compositionally biased region" description="Acidic residues" evidence="5">
    <location>
        <begin position="88"/>
        <end position="107"/>
    </location>
</feature>
<feature type="compositionally biased region" description="Basic and acidic residues" evidence="5">
    <location>
        <begin position="151"/>
        <end position="160"/>
    </location>
</feature>
<feature type="compositionally biased region" description="Low complexity" evidence="5">
    <location>
        <begin position="529"/>
        <end position="559"/>
    </location>
</feature>
<feature type="modified residue" description="N-acetylmethionine" evidence="2">
    <location>
        <position position="1"/>
    </location>
</feature>
<feature type="modified residue" description="Phosphoserine" evidence="2">
    <location>
        <position position="87"/>
    </location>
</feature>
<feature type="modified residue" description="Phosphoserine" evidence="2">
    <location>
        <position position="309"/>
    </location>
</feature>
<feature type="modified residue" description="Asymmetric dimethylarginine" evidence="10">
    <location>
        <position position="370"/>
    </location>
</feature>
<feature type="splice variant" id="VSP_026775" description="In isoform 3." evidence="8">
    <original>TPINRIPIMAKQILDLYMLYKLVTEKGGLVEIINKKIWREITKGLNLPTSITSAAF</original>
    <variation>DPAAAAECTAFLLPSLIVIKYPGTTQLSTIMQKGVWHPNQPDSHHGQADPGPVHAV</variation>
    <location>
        <begin position="232"/>
        <end position="287"/>
    </location>
</feature>
<feature type="splice variant" id="VSP_026776" description="In isoform 2." evidence="7">
    <original>INRIPIMAKQILDLYMLYKLVTEKGGLVEIINKKIWREITKGLNLPTSI</original>
    <variation>SGASPAGIVLKATWPCGWPGQPPPLLCLVCILTRKKKKNVIAHGSLGRD</variation>
    <location>
        <begin position="234"/>
        <end position="282"/>
    </location>
</feature>
<feature type="splice variant" id="VSP_026777" description="In isoform 2." evidence="7">
    <location>
        <begin position="283"/>
        <end position="568"/>
    </location>
</feature>
<feature type="splice variant" id="VSP_026778" description="In isoform 3." evidence="8">
    <location>
        <begin position="288"/>
        <end position="568"/>
    </location>
</feature>
<feature type="sequence conflict" description="In Ref. 2; BAE24019." evidence="9" ref="2">
    <original>E</original>
    <variation>G</variation>
    <location>
        <position position="99"/>
    </location>
</feature>
<dbReference type="EMBL" id="AF116847">
    <property type="protein sequence ID" value="AAD09134.1"/>
    <property type="molecule type" value="mRNA"/>
</dbReference>
<dbReference type="EMBL" id="AK139455">
    <property type="protein sequence ID" value="BAE24019.1"/>
    <property type="molecule type" value="mRNA"/>
</dbReference>
<dbReference type="EMBL" id="BC049776">
    <property type="protein sequence ID" value="AAH49776.1"/>
    <property type="molecule type" value="mRNA"/>
</dbReference>
<dbReference type="CCDS" id="CCDS23233.1">
    <molecule id="Q9Z1N7-1"/>
</dbReference>
<dbReference type="RefSeq" id="NP_001366282.1">
    <molecule id="Q9Z1N7-1"/>
    <property type="nucleotide sequence ID" value="NM_001379353.1"/>
</dbReference>
<dbReference type="RefSeq" id="NP_062663.1">
    <molecule id="Q9Z1N7-1"/>
    <property type="nucleotide sequence ID" value="NM_019689.3"/>
</dbReference>
<dbReference type="RefSeq" id="XP_006511354.1">
    <property type="nucleotide sequence ID" value="XM_006511291.3"/>
</dbReference>
<dbReference type="SMR" id="Q9Z1N7"/>
<dbReference type="BioGRID" id="207941">
    <property type="interactions" value="3"/>
</dbReference>
<dbReference type="FunCoup" id="Q9Z1N7">
    <property type="interactions" value="2771"/>
</dbReference>
<dbReference type="IntAct" id="Q9Z1N7">
    <property type="interactions" value="1"/>
</dbReference>
<dbReference type="STRING" id="10090.ENSMUSP00000130173"/>
<dbReference type="GlyGen" id="Q9Z1N7">
    <property type="glycosylation" value="5 sites, 1 O-linked glycan (2 sites)"/>
</dbReference>
<dbReference type="iPTMnet" id="Q9Z1N7"/>
<dbReference type="PhosphoSitePlus" id="Q9Z1N7"/>
<dbReference type="PaxDb" id="10090-ENSMUSP00000130173"/>
<dbReference type="ProteomicsDB" id="277286">
    <molecule id="Q9Z1N7-1"/>
</dbReference>
<dbReference type="ProteomicsDB" id="277287">
    <molecule id="Q9Z1N7-2"/>
</dbReference>
<dbReference type="ProteomicsDB" id="277288">
    <molecule id="Q9Z1N7-3"/>
</dbReference>
<dbReference type="Antibodypedia" id="26965">
    <property type="antibodies" value="198 antibodies from 22 providers"/>
</dbReference>
<dbReference type="DNASU" id="56380"/>
<dbReference type="Ensembl" id="ENSMUST00000004780.16">
    <molecule id="Q9Z1N7-1"/>
    <property type="protein sequence ID" value="ENSMUSP00000004780.10"/>
    <property type="gene ID" value="ENSMUSG00000004661.16"/>
</dbReference>
<dbReference type="Ensembl" id="ENSMUST00000164035.8">
    <molecule id="Q9Z1N7-3"/>
    <property type="protein sequence ID" value="ENSMUSP00000131677.2"/>
    <property type="gene ID" value="ENSMUSG00000004661.16"/>
</dbReference>
<dbReference type="Ensembl" id="ENSMUST00000171444.8">
    <molecule id="Q9Z1N7-1"/>
    <property type="protein sequence ID" value="ENSMUSP00000130173.2"/>
    <property type="gene ID" value="ENSMUSG00000004661.16"/>
</dbReference>
<dbReference type="GeneID" id="56380"/>
<dbReference type="KEGG" id="mmu:56380"/>
<dbReference type="UCSC" id="uc009pvt.2">
    <molecule id="Q9Z1N7-1"/>
    <property type="organism name" value="mouse"/>
</dbReference>
<dbReference type="AGR" id="MGI:1930768"/>
<dbReference type="CTD" id="10620"/>
<dbReference type="MGI" id="MGI:1930768">
    <property type="gene designation" value="Arid3b"/>
</dbReference>
<dbReference type="VEuPathDB" id="HostDB:ENSMUSG00000004661"/>
<dbReference type="eggNOG" id="KOG2744">
    <property type="taxonomic scope" value="Eukaryota"/>
</dbReference>
<dbReference type="GeneTree" id="ENSGT00940000156052"/>
<dbReference type="HOGENOM" id="CLU_026952_2_0_1"/>
<dbReference type="InParanoid" id="Q9Z1N7"/>
<dbReference type="OMA" id="SGRQTWR"/>
<dbReference type="OrthoDB" id="10044343at2759"/>
<dbReference type="PhylomeDB" id="Q9Z1N7"/>
<dbReference type="TreeFam" id="TF320364"/>
<dbReference type="BioGRID-ORCS" id="56380">
    <property type="hits" value="8 hits in 79 CRISPR screens"/>
</dbReference>
<dbReference type="ChiTaRS" id="Arid3b">
    <property type="organism name" value="mouse"/>
</dbReference>
<dbReference type="PRO" id="PR:Q9Z1N7"/>
<dbReference type="Proteomes" id="UP000000589">
    <property type="component" value="Chromosome 9"/>
</dbReference>
<dbReference type="RNAct" id="Q9Z1N7">
    <property type="molecule type" value="protein"/>
</dbReference>
<dbReference type="Bgee" id="ENSMUSG00000004661">
    <property type="expression patterns" value="Expressed in embryonic post-anal tail and 146 other cell types or tissues"/>
</dbReference>
<dbReference type="ExpressionAtlas" id="Q9Z1N7">
    <property type="expression patterns" value="baseline and differential"/>
</dbReference>
<dbReference type="GO" id="GO:0005654">
    <property type="term" value="C:nucleoplasm"/>
    <property type="evidence" value="ECO:0007669"/>
    <property type="project" value="Ensembl"/>
</dbReference>
<dbReference type="GO" id="GO:0003677">
    <property type="term" value="F:DNA binding"/>
    <property type="evidence" value="ECO:0007669"/>
    <property type="project" value="UniProtKB-KW"/>
</dbReference>
<dbReference type="GO" id="GO:0045944">
    <property type="term" value="P:positive regulation of transcription by RNA polymerase II"/>
    <property type="evidence" value="ECO:0000314"/>
    <property type="project" value="NTNU_SB"/>
</dbReference>
<dbReference type="CDD" id="cd16879">
    <property type="entry name" value="ARID_ARID3B"/>
    <property type="match status" value="1"/>
</dbReference>
<dbReference type="FunFam" id="1.10.150.60:FF:000008">
    <property type="entry name" value="Putative AT-rich interactive domain-containing protein 3B"/>
    <property type="match status" value="1"/>
</dbReference>
<dbReference type="Gene3D" id="1.10.150.60">
    <property type="entry name" value="ARID DNA-binding domain"/>
    <property type="match status" value="1"/>
</dbReference>
<dbReference type="InterPro" id="IPR045147">
    <property type="entry name" value="ARI3A/B/C"/>
</dbReference>
<dbReference type="InterPro" id="IPR001606">
    <property type="entry name" value="ARID_dom"/>
</dbReference>
<dbReference type="InterPro" id="IPR036431">
    <property type="entry name" value="ARID_dom_sf"/>
</dbReference>
<dbReference type="InterPro" id="IPR023334">
    <property type="entry name" value="REKLES_domain"/>
</dbReference>
<dbReference type="PANTHER" id="PTHR15348:SF3">
    <property type="entry name" value="AT-RICH INTERACTIVE DOMAIN-CONTAINING PROTEIN 3B"/>
    <property type="match status" value="1"/>
</dbReference>
<dbReference type="PANTHER" id="PTHR15348">
    <property type="entry name" value="AT-RICH INTERACTIVE DOMAIN-CONTAINING PROTEIN ARID DOMAIN- CONTAINING PROTEIN DEAD RINGER PROTEIN B-CELL REGULATOR OF IGH TRANSCRIPTION BRIGHT"/>
    <property type="match status" value="1"/>
</dbReference>
<dbReference type="Pfam" id="PF01388">
    <property type="entry name" value="ARID"/>
    <property type="match status" value="1"/>
</dbReference>
<dbReference type="SMART" id="SM01014">
    <property type="entry name" value="ARID"/>
    <property type="match status" value="1"/>
</dbReference>
<dbReference type="SMART" id="SM00501">
    <property type="entry name" value="BRIGHT"/>
    <property type="match status" value="1"/>
</dbReference>
<dbReference type="SUPFAM" id="SSF46774">
    <property type="entry name" value="ARID-like"/>
    <property type="match status" value="1"/>
</dbReference>
<dbReference type="PROSITE" id="PS51011">
    <property type="entry name" value="ARID"/>
    <property type="match status" value="1"/>
</dbReference>
<dbReference type="PROSITE" id="PS51486">
    <property type="entry name" value="REKLES"/>
    <property type="match status" value="1"/>
</dbReference>
<proteinExistence type="evidence at protein level"/>
<gene>
    <name type="primary">Arid3b</name>
    <name type="synonym">Bdp</name>
    <name type="synonym">Dril2</name>
</gene>
<protein>
    <recommendedName>
        <fullName>AT-rich interactive domain-containing protein 3B</fullName>
        <shortName>ARID domain-containing protein 3B</shortName>
    </recommendedName>
    <alternativeName>
        <fullName>Bright and dead ringer protein</fullName>
    </alternativeName>
    <alternativeName>
        <fullName>Bright-like protein</fullName>
    </alternativeName>
</protein>
<comment type="function">
    <text evidence="6">Transcription factor involved in the production of cranial mesenchymal tissues. Favors nuclear targeting of ARID3A.</text>
</comment>
<comment type="subunit">
    <text evidence="1">Heterodimer with ARID3A. Interacts with unphosphorylated RB1 (By similarity).</text>
</comment>
<comment type="subcellular location">
    <subcellularLocation>
        <location evidence="3">Nucleus</location>
    </subcellularLocation>
</comment>
<comment type="alternative products">
    <event type="alternative splicing"/>
    <isoform>
        <id>Q9Z1N7-1</id>
        <name>1</name>
        <sequence type="displayed"/>
    </isoform>
    <isoform>
        <id>Q9Z1N7-2</id>
        <name>2</name>
        <sequence type="described" ref="VSP_026776 VSP_026777"/>
    </isoform>
    <isoform>
        <id>Q9Z1N7-3</id>
        <name>3</name>
        <sequence type="described" ref="VSP_026775 VSP_026778"/>
    </isoform>
</comment>
<comment type="tissue specificity">
    <text evidence="6">Expressed at high levels in testis. Also expressed in prostate, thyroid and thymus.</text>
</comment>
<comment type="developmental stage">
    <text evidence="6">First detected at 7 dpc. Strongly expressed in cranial mesenchyme and caudal mesoderm. Expression in cranial mesenchyme decreases starting from 10.5 dpc.</text>
</comment>
<comment type="disruption phenotype">
    <text evidence="6">Embryos die before 11.5 dpc and display various abnormalities, including wavy neural tube, small branchial arches and defects of cardiovascular system.</text>
</comment>
<organism>
    <name type="scientific">Mus musculus</name>
    <name type="common">Mouse</name>
    <dbReference type="NCBI Taxonomy" id="10090"/>
    <lineage>
        <taxon>Eukaryota</taxon>
        <taxon>Metazoa</taxon>
        <taxon>Chordata</taxon>
        <taxon>Craniata</taxon>
        <taxon>Vertebrata</taxon>
        <taxon>Euteleostomi</taxon>
        <taxon>Mammalia</taxon>
        <taxon>Eutheria</taxon>
        <taxon>Euarchontoglires</taxon>
        <taxon>Glires</taxon>
        <taxon>Rodentia</taxon>
        <taxon>Myomorpha</taxon>
        <taxon>Muroidea</taxon>
        <taxon>Muridae</taxon>
        <taxon>Murinae</taxon>
        <taxon>Mus</taxon>
        <taxon>Mus</taxon>
    </lineage>
</organism>
<accession>Q9Z1N7</accession>
<accession>Q3UTG1</accession>
<accession>Q810L9</accession>